<accession>P60636</accession>
<accession>Q8XEP3</accession>
<sequence>MSKSLNIIWQYIRAFVLIYACLYAGIFLASLLPITIPGSIIGMLILFVLLALQILPAKWVNPGCYVLIRYMALLFVPIGVGVMQYFDLLRAQFGPVVVSCAISTLVVFVVVSWSSHLIHGERKVVGQKGTKK</sequence>
<protein>
    <recommendedName>
        <fullName>UPF0299 membrane protein YohJ</fullName>
    </recommendedName>
</protein>
<gene>
    <name type="primary">yohJ</name>
    <name type="ordered locus">STM2181</name>
</gene>
<reference key="1">
    <citation type="journal article" date="2001" name="Nature">
        <title>Complete genome sequence of Salmonella enterica serovar Typhimurium LT2.</title>
        <authorList>
            <person name="McClelland M."/>
            <person name="Sanderson K.E."/>
            <person name="Spieth J."/>
            <person name="Clifton S.W."/>
            <person name="Latreille P."/>
            <person name="Courtney L."/>
            <person name="Porwollik S."/>
            <person name="Ali J."/>
            <person name="Dante M."/>
            <person name="Du F."/>
            <person name="Hou S."/>
            <person name="Layman D."/>
            <person name="Leonard S."/>
            <person name="Nguyen C."/>
            <person name="Scott K."/>
            <person name="Holmes A."/>
            <person name="Grewal N."/>
            <person name="Mulvaney E."/>
            <person name="Ryan E."/>
            <person name="Sun H."/>
            <person name="Florea L."/>
            <person name="Miller W."/>
            <person name="Stoneking T."/>
            <person name="Nhan M."/>
            <person name="Waterston R."/>
            <person name="Wilson R.K."/>
        </authorList>
    </citation>
    <scope>NUCLEOTIDE SEQUENCE [LARGE SCALE GENOMIC DNA]</scope>
    <source>
        <strain>LT2 / SGSC1412 / ATCC 700720</strain>
    </source>
</reference>
<evidence type="ECO:0000250" key="1"/>
<evidence type="ECO:0000255" key="2"/>
<evidence type="ECO:0000305" key="3"/>
<organism>
    <name type="scientific">Salmonella typhimurium (strain LT2 / SGSC1412 / ATCC 700720)</name>
    <dbReference type="NCBI Taxonomy" id="99287"/>
    <lineage>
        <taxon>Bacteria</taxon>
        <taxon>Pseudomonadati</taxon>
        <taxon>Pseudomonadota</taxon>
        <taxon>Gammaproteobacteria</taxon>
        <taxon>Enterobacterales</taxon>
        <taxon>Enterobacteriaceae</taxon>
        <taxon>Salmonella</taxon>
    </lineage>
</organism>
<dbReference type="EMBL" id="AE006468">
    <property type="protein sequence ID" value="AAL21085.1"/>
    <property type="molecule type" value="Genomic_DNA"/>
</dbReference>
<dbReference type="RefSeq" id="NP_461126.1">
    <property type="nucleotide sequence ID" value="NC_003197.2"/>
</dbReference>
<dbReference type="RefSeq" id="WP_000045719.1">
    <property type="nucleotide sequence ID" value="NC_003197.2"/>
</dbReference>
<dbReference type="SMR" id="P60636"/>
<dbReference type="STRING" id="99287.STM2181"/>
<dbReference type="PaxDb" id="99287-STM2181"/>
<dbReference type="GeneID" id="1253703"/>
<dbReference type="KEGG" id="stm:STM2181"/>
<dbReference type="PATRIC" id="fig|99287.12.peg.2308"/>
<dbReference type="HOGENOM" id="CLU_113736_1_1_6"/>
<dbReference type="OMA" id="MSVMFIP"/>
<dbReference type="PhylomeDB" id="P60636"/>
<dbReference type="BioCyc" id="SENT99287:STM2181-MONOMER"/>
<dbReference type="Proteomes" id="UP000001014">
    <property type="component" value="Chromosome"/>
</dbReference>
<dbReference type="GO" id="GO:0005886">
    <property type="term" value="C:plasma membrane"/>
    <property type="evidence" value="ECO:0007669"/>
    <property type="project" value="UniProtKB-SubCell"/>
</dbReference>
<dbReference type="HAMAP" id="MF_01144">
    <property type="entry name" value="UPF0299"/>
    <property type="match status" value="1"/>
</dbReference>
<dbReference type="InterPro" id="IPR005538">
    <property type="entry name" value="LrgA/CidA"/>
</dbReference>
<dbReference type="InterPro" id="IPR022957">
    <property type="entry name" value="Uncharacterised_UPF0299"/>
</dbReference>
<dbReference type="NCBIfam" id="NF002494">
    <property type="entry name" value="PRK01821.1"/>
    <property type="match status" value="1"/>
</dbReference>
<dbReference type="PANTHER" id="PTHR33931">
    <property type="entry name" value="HOLIN-LIKE PROTEIN CIDA-RELATED"/>
    <property type="match status" value="1"/>
</dbReference>
<dbReference type="PANTHER" id="PTHR33931:SF5">
    <property type="entry name" value="UPF0299 MEMBRANE PROTEIN YOHJ"/>
    <property type="match status" value="1"/>
</dbReference>
<dbReference type="Pfam" id="PF03788">
    <property type="entry name" value="LrgA"/>
    <property type="match status" value="1"/>
</dbReference>
<name>YOHJ_SALTY</name>
<comment type="subcellular location">
    <subcellularLocation>
        <location evidence="1">Cell inner membrane</location>
        <topology evidence="1">Multi-pass membrane protein</topology>
    </subcellularLocation>
</comment>
<comment type="similarity">
    <text evidence="3">Belongs to the UPF0299 family.</text>
</comment>
<feature type="chain" id="PRO_0000072813" description="UPF0299 membrane protein YohJ">
    <location>
        <begin position="1"/>
        <end position="132"/>
    </location>
</feature>
<feature type="topological domain" description="Periplasmic" evidence="2">
    <location>
        <begin position="1"/>
        <end position="6"/>
    </location>
</feature>
<feature type="transmembrane region" description="Helical" evidence="2">
    <location>
        <begin position="7"/>
        <end position="27"/>
    </location>
</feature>
<feature type="topological domain" description="Cytoplasmic" evidence="2">
    <location>
        <begin position="28"/>
        <end position="30"/>
    </location>
</feature>
<feature type="transmembrane region" description="Helical" evidence="2">
    <location>
        <begin position="31"/>
        <end position="51"/>
    </location>
</feature>
<feature type="topological domain" description="Periplasmic" evidence="2">
    <location>
        <begin position="52"/>
        <end position="62"/>
    </location>
</feature>
<feature type="transmembrane region" description="Helical" evidence="2">
    <location>
        <begin position="63"/>
        <end position="83"/>
    </location>
</feature>
<feature type="topological domain" description="Cytoplasmic" evidence="2">
    <location>
        <begin position="84"/>
        <end position="92"/>
    </location>
</feature>
<feature type="transmembrane region" description="Helical" evidence="2">
    <location>
        <begin position="93"/>
        <end position="113"/>
    </location>
</feature>
<feature type="topological domain" description="Periplasmic" evidence="2">
    <location>
        <begin position="114"/>
        <end position="132"/>
    </location>
</feature>
<proteinExistence type="inferred from homology"/>
<keyword id="KW-0997">Cell inner membrane</keyword>
<keyword id="KW-1003">Cell membrane</keyword>
<keyword id="KW-0472">Membrane</keyword>
<keyword id="KW-1185">Reference proteome</keyword>
<keyword id="KW-0812">Transmembrane</keyword>
<keyword id="KW-1133">Transmembrane helix</keyword>